<accession>Q653B6</accession>
<accession>A0A0P0XQE8</accession>
<reference key="1">
    <citation type="journal article" date="2005" name="Nature">
        <title>The map-based sequence of the rice genome.</title>
        <authorList>
            <consortium name="International rice genome sequencing project (IRGSP)"/>
        </authorList>
    </citation>
    <scope>NUCLEOTIDE SEQUENCE [LARGE SCALE GENOMIC DNA]</scope>
    <source>
        <strain>cv. Nipponbare</strain>
    </source>
</reference>
<reference key="2">
    <citation type="journal article" date="2008" name="Nucleic Acids Res.">
        <title>The rice annotation project database (RAP-DB): 2008 update.</title>
        <authorList>
            <consortium name="The rice annotation project (RAP)"/>
        </authorList>
    </citation>
    <scope>GENOME REANNOTATION</scope>
    <source>
        <strain>cv. Nipponbare</strain>
    </source>
</reference>
<reference key="3">
    <citation type="journal article" date="2013" name="Rice">
        <title>Improvement of the Oryza sativa Nipponbare reference genome using next generation sequence and optical map data.</title>
        <authorList>
            <person name="Kawahara Y."/>
            <person name="de la Bastide M."/>
            <person name="Hamilton J.P."/>
            <person name="Kanamori H."/>
            <person name="McCombie W.R."/>
            <person name="Ouyang S."/>
            <person name="Schwartz D.C."/>
            <person name="Tanaka T."/>
            <person name="Wu J."/>
            <person name="Zhou S."/>
            <person name="Childs K.L."/>
            <person name="Davidson R.M."/>
            <person name="Lin H."/>
            <person name="Quesada-Ocampo L."/>
            <person name="Vaillancourt B."/>
            <person name="Sakai H."/>
            <person name="Lee S.S."/>
            <person name="Kim J."/>
            <person name="Numa H."/>
            <person name="Itoh T."/>
            <person name="Buell C.R."/>
            <person name="Matsumoto T."/>
        </authorList>
    </citation>
    <scope>GENOME REANNOTATION</scope>
    <source>
        <strain>cv. Nipponbare</strain>
    </source>
</reference>
<reference key="4">
    <citation type="journal article" date="2005" name="PLoS Biol.">
        <title>The genomes of Oryza sativa: a history of duplications.</title>
        <authorList>
            <person name="Yu J."/>
            <person name="Wang J."/>
            <person name="Lin W."/>
            <person name="Li S."/>
            <person name="Li H."/>
            <person name="Zhou J."/>
            <person name="Ni P."/>
            <person name="Dong W."/>
            <person name="Hu S."/>
            <person name="Zeng C."/>
            <person name="Zhang J."/>
            <person name="Zhang Y."/>
            <person name="Li R."/>
            <person name="Xu Z."/>
            <person name="Li S."/>
            <person name="Li X."/>
            <person name="Zheng H."/>
            <person name="Cong L."/>
            <person name="Lin L."/>
            <person name="Yin J."/>
            <person name="Geng J."/>
            <person name="Li G."/>
            <person name="Shi J."/>
            <person name="Liu J."/>
            <person name="Lv H."/>
            <person name="Li J."/>
            <person name="Wang J."/>
            <person name="Deng Y."/>
            <person name="Ran L."/>
            <person name="Shi X."/>
            <person name="Wang X."/>
            <person name="Wu Q."/>
            <person name="Li C."/>
            <person name="Ren X."/>
            <person name="Wang J."/>
            <person name="Wang X."/>
            <person name="Li D."/>
            <person name="Liu D."/>
            <person name="Zhang X."/>
            <person name="Ji Z."/>
            <person name="Zhao W."/>
            <person name="Sun Y."/>
            <person name="Zhang Z."/>
            <person name="Bao J."/>
            <person name="Han Y."/>
            <person name="Dong L."/>
            <person name="Ji J."/>
            <person name="Chen P."/>
            <person name="Wu S."/>
            <person name="Liu J."/>
            <person name="Xiao Y."/>
            <person name="Bu D."/>
            <person name="Tan J."/>
            <person name="Yang L."/>
            <person name="Ye C."/>
            <person name="Zhang J."/>
            <person name="Xu J."/>
            <person name="Zhou Y."/>
            <person name="Yu Y."/>
            <person name="Zhang B."/>
            <person name="Zhuang S."/>
            <person name="Wei H."/>
            <person name="Liu B."/>
            <person name="Lei M."/>
            <person name="Yu H."/>
            <person name="Li Y."/>
            <person name="Xu H."/>
            <person name="Wei S."/>
            <person name="He X."/>
            <person name="Fang L."/>
            <person name="Zhang Z."/>
            <person name="Zhang Y."/>
            <person name="Huang X."/>
            <person name="Su Z."/>
            <person name="Tong W."/>
            <person name="Li J."/>
            <person name="Tong Z."/>
            <person name="Li S."/>
            <person name="Ye J."/>
            <person name="Wang L."/>
            <person name="Fang L."/>
            <person name="Lei T."/>
            <person name="Chen C.-S."/>
            <person name="Chen H.-C."/>
            <person name="Xu Z."/>
            <person name="Li H."/>
            <person name="Huang H."/>
            <person name="Zhang F."/>
            <person name="Xu H."/>
            <person name="Li N."/>
            <person name="Zhao C."/>
            <person name="Li S."/>
            <person name="Dong L."/>
            <person name="Huang Y."/>
            <person name="Li L."/>
            <person name="Xi Y."/>
            <person name="Qi Q."/>
            <person name="Li W."/>
            <person name="Zhang B."/>
            <person name="Hu W."/>
            <person name="Zhang Y."/>
            <person name="Tian X."/>
            <person name="Jiao Y."/>
            <person name="Liang X."/>
            <person name="Jin J."/>
            <person name="Gao L."/>
            <person name="Zheng W."/>
            <person name="Hao B."/>
            <person name="Liu S.-M."/>
            <person name="Wang W."/>
            <person name="Yuan L."/>
            <person name="Cao M."/>
            <person name="McDermott J."/>
            <person name="Samudrala R."/>
            <person name="Wang J."/>
            <person name="Wong G.K.-S."/>
            <person name="Yang H."/>
        </authorList>
    </citation>
    <scope>NUCLEOTIDE SEQUENCE [LARGE SCALE GENOMIC DNA]</scope>
    <source>
        <strain>cv. Nipponbare</strain>
    </source>
</reference>
<reference key="5">
    <citation type="journal article" date="2003" name="Science">
        <title>Collection, mapping, and annotation of over 28,000 cDNA clones from japonica rice.</title>
        <authorList>
            <consortium name="The rice full-length cDNA consortium"/>
        </authorList>
    </citation>
    <scope>NUCLEOTIDE SEQUENCE [LARGE SCALE MRNA]</scope>
    <source>
        <strain>cv. Nipponbare</strain>
    </source>
</reference>
<reference key="6">
    <citation type="journal article" date="2009" name="J. Genet. Genomics">
        <title>Molecular evolution and functional divergence of HAK potassium transporter gene family in rice (Oryza sativa L.).</title>
        <authorList>
            <person name="Yang Z."/>
            <person name="Gao Q."/>
            <person name="Sun C."/>
            <person name="Li W."/>
            <person name="Gu S."/>
            <person name="Xu C."/>
        </authorList>
    </citation>
    <scope>GENE FAMILY</scope>
</reference>
<organism>
    <name type="scientific">Oryza sativa subsp. japonica</name>
    <name type="common">Rice</name>
    <dbReference type="NCBI Taxonomy" id="39947"/>
    <lineage>
        <taxon>Eukaryota</taxon>
        <taxon>Viridiplantae</taxon>
        <taxon>Streptophyta</taxon>
        <taxon>Embryophyta</taxon>
        <taxon>Tracheophyta</taxon>
        <taxon>Spermatophyta</taxon>
        <taxon>Magnoliopsida</taxon>
        <taxon>Liliopsida</taxon>
        <taxon>Poales</taxon>
        <taxon>Poaceae</taxon>
        <taxon>BOP clade</taxon>
        <taxon>Oryzoideae</taxon>
        <taxon>Oryzeae</taxon>
        <taxon>Oryzinae</taxon>
        <taxon>Oryza</taxon>
        <taxon>Oryza sativa</taxon>
    </lineage>
</organism>
<proteinExistence type="evidence at transcript level"/>
<dbReference type="EMBL" id="AP005396">
    <property type="protein sequence ID" value="BAD46101.1"/>
    <property type="molecule type" value="Genomic_DNA"/>
</dbReference>
<dbReference type="EMBL" id="AP008215">
    <property type="protein sequence ID" value="BAF25852.1"/>
    <property type="molecule type" value="Genomic_DNA"/>
</dbReference>
<dbReference type="EMBL" id="AP014965">
    <property type="protein sequence ID" value="BAT09419.1"/>
    <property type="molecule type" value="Genomic_DNA"/>
</dbReference>
<dbReference type="EMBL" id="CM000146">
    <property type="protein sequence ID" value="EAZ45677.1"/>
    <property type="molecule type" value="Genomic_DNA"/>
</dbReference>
<dbReference type="EMBL" id="AK065464">
    <property type="protein sequence ID" value="BAG89530.1"/>
    <property type="molecule type" value="mRNA"/>
</dbReference>
<dbReference type="RefSeq" id="XP_015611271.1">
    <property type="nucleotide sequence ID" value="XM_015755785.1"/>
</dbReference>
<dbReference type="FunCoup" id="Q653B6">
    <property type="interactions" value="94"/>
</dbReference>
<dbReference type="STRING" id="39947.Q653B6"/>
<dbReference type="GlyCosmos" id="Q653B6">
    <property type="glycosylation" value="1 site, No reported glycans"/>
</dbReference>
<dbReference type="PaxDb" id="39947-Q653B6"/>
<dbReference type="EnsemblPlants" id="Os09t0563200-01">
    <property type="protein sequence ID" value="Os09t0563200-01"/>
    <property type="gene ID" value="Os09g0563200"/>
</dbReference>
<dbReference type="Gramene" id="Os09t0563200-01">
    <property type="protein sequence ID" value="Os09t0563200-01"/>
    <property type="gene ID" value="Os09g0563200"/>
</dbReference>
<dbReference type="KEGG" id="dosa:Os09g0563200"/>
<dbReference type="eggNOG" id="ENOG502QPSA">
    <property type="taxonomic scope" value="Eukaryota"/>
</dbReference>
<dbReference type="HOGENOM" id="CLU_008142_2_0_1"/>
<dbReference type="InParanoid" id="Q653B6"/>
<dbReference type="OMA" id="NWILMVF"/>
<dbReference type="OrthoDB" id="504708at2759"/>
<dbReference type="Proteomes" id="UP000000763">
    <property type="component" value="Chromosome 9"/>
</dbReference>
<dbReference type="Proteomes" id="UP000007752">
    <property type="component" value="Chromosome 9"/>
</dbReference>
<dbReference type="Proteomes" id="UP000059680">
    <property type="component" value="Chromosome 9"/>
</dbReference>
<dbReference type="GO" id="GO:0016020">
    <property type="term" value="C:membrane"/>
    <property type="evidence" value="ECO:0000318"/>
    <property type="project" value="GO_Central"/>
</dbReference>
<dbReference type="GO" id="GO:0015079">
    <property type="term" value="F:potassium ion transmembrane transporter activity"/>
    <property type="evidence" value="ECO:0000318"/>
    <property type="project" value="GO_Central"/>
</dbReference>
<dbReference type="GO" id="GO:0006813">
    <property type="term" value="P:potassium ion transport"/>
    <property type="evidence" value="ECO:0000318"/>
    <property type="project" value="GO_Central"/>
</dbReference>
<dbReference type="InterPro" id="IPR003855">
    <property type="entry name" value="K+_transporter"/>
</dbReference>
<dbReference type="InterPro" id="IPR053952">
    <property type="entry name" value="K_trans_C"/>
</dbReference>
<dbReference type="InterPro" id="IPR053951">
    <property type="entry name" value="K_trans_N"/>
</dbReference>
<dbReference type="NCBIfam" id="TIGR00794">
    <property type="entry name" value="kup"/>
    <property type="match status" value="1"/>
</dbReference>
<dbReference type="PANTHER" id="PTHR30540">
    <property type="entry name" value="OSMOTIC STRESS POTASSIUM TRANSPORTER"/>
    <property type="match status" value="1"/>
</dbReference>
<dbReference type="PANTHER" id="PTHR30540:SF31">
    <property type="entry name" value="POTASSIUM TRANSPORTER 18"/>
    <property type="match status" value="1"/>
</dbReference>
<dbReference type="Pfam" id="PF02705">
    <property type="entry name" value="K_trans"/>
    <property type="match status" value="1"/>
</dbReference>
<dbReference type="Pfam" id="PF22776">
    <property type="entry name" value="K_trans_C"/>
    <property type="match status" value="1"/>
</dbReference>
<feature type="chain" id="PRO_0000379533" description="Potassium transporter 18">
    <location>
        <begin position="1"/>
        <end position="793"/>
    </location>
</feature>
<feature type="topological domain" description="Cytoplasmic" evidence="2">
    <location>
        <begin position="1"/>
        <end position="53"/>
    </location>
</feature>
<feature type="transmembrane region" description="Helical; Name=1" evidence="2">
    <location>
        <begin position="54"/>
        <end position="74"/>
    </location>
</feature>
<feature type="topological domain" description="Extracellular" evidence="2">
    <location>
        <begin position="75"/>
        <end position="86"/>
    </location>
</feature>
<feature type="transmembrane region" description="Helical; Name=2" evidence="2">
    <location>
        <begin position="87"/>
        <end position="107"/>
    </location>
</feature>
<feature type="topological domain" description="Cytoplasmic" evidence="2">
    <location>
        <begin position="108"/>
        <end position="172"/>
    </location>
</feature>
<feature type="transmembrane region" description="Helical; Name=3" evidence="2">
    <location>
        <begin position="173"/>
        <end position="193"/>
    </location>
</feature>
<feature type="topological domain" description="Extracellular" evidence="2">
    <location>
        <begin position="194"/>
        <end position="214"/>
    </location>
</feature>
<feature type="transmembrane region" description="Helical; Name=4" evidence="2">
    <location>
        <begin position="215"/>
        <end position="235"/>
    </location>
</feature>
<feature type="topological domain" description="Cytoplasmic" evidence="2">
    <location>
        <begin position="236"/>
        <end position="237"/>
    </location>
</feature>
<feature type="transmembrane region" description="Helical; Name=5" evidence="2">
    <location>
        <begin position="238"/>
        <end position="258"/>
    </location>
</feature>
<feature type="topological domain" description="Extracellular" evidence="2">
    <location>
        <begin position="259"/>
        <end position="287"/>
    </location>
</feature>
<feature type="transmembrane region" description="Helical; Name=6" evidence="2">
    <location>
        <begin position="288"/>
        <end position="308"/>
    </location>
</feature>
<feature type="topological domain" description="Cytoplasmic" evidence="2">
    <location>
        <position position="309"/>
    </location>
</feature>
<feature type="transmembrane region" description="Helical; Name=7" evidence="2">
    <location>
        <begin position="310"/>
        <end position="330"/>
    </location>
</feature>
<feature type="topological domain" description="Extracellular" evidence="2">
    <location>
        <begin position="331"/>
        <end position="351"/>
    </location>
</feature>
<feature type="transmembrane region" description="Helical; Name=8" evidence="2">
    <location>
        <begin position="352"/>
        <end position="372"/>
    </location>
</feature>
<feature type="topological domain" description="Cytoplasmic" evidence="2">
    <location>
        <begin position="373"/>
        <end position="409"/>
    </location>
</feature>
<feature type="transmembrane region" description="Helical; Name=9" evidence="2">
    <location>
        <begin position="410"/>
        <end position="430"/>
    </location>
</feature>
<feature type="topological domain" description="Extracellular" evidence="2">
    <location>
        <begin position="431"/>
        <end position="442"/>
    </location>
</feature>
<feature type="transmembrane region" description="Helical; Name=10" evidence="2">
    <location>
        <begin position="443"/>
        <end position="463"/>
    </location>
</feature>
<feature type="topological domain" description="Cytoplasmic" evidence="2">
    <location>
        <begin position="464"/>
        <end position="468"/>
    </location>
</feature>
<feature type="transmembrane region" description="Helical; Name=11" evidence="2">
    <location>
        <begin position="469"/>
        <end position="489"/>
    </location>
</feature>
<feature type="topological domain" description="Extracellular" evidence="2">
    <location>
        <begin position="490"/>
        <end position="494"/>
    </location>
</feature>
<feature type="transmembrane region" description="Helical; Name=12" evidence="2">
    <location>
        <begin position="495"/>
        <end position="515"/>
    </location>
</feature>
<feature type="topological domain" description="Cytoplasmic" evidence="2">
    <location>
        <begin position="516"/>
        <end position="793"/>
    </location>
</feature>
<feature type="glycosylation site" description="N-linked (GlcNAc...) asparagine" evidence="2">
    <location>
        <position position="432"/>
    </location>
</feature>
<protein>
    <recommendedName>
        <fullName>Potassium transporter 18</fullName>
    </recommendedName>
    <alternativeName>
        <fullName>OsHAK18</fullName>
    </alternativeName>
</protein>
<comment type="function">
    <text evidence="1">High-affinity potassium transporter.</text>
</comment>
<comment type="subcellular location">
    <subcellularLocation>
        <location evidence="3">Membrane</location>
        <topology evidence="3">Multi-pass membrane protein</topology>
    </subcellularLocation>
</comment>
<comment type="similarity">
    <text evidence="3">Belongs to the HAK/KUP transporter (TC 2.A.72.3) family.</text>
</comment>
<name>HAK18_ORYSJ</name>
<gene>
    <name type="primary">HAK18</name>
    <name type="ordered locus">Os09g0563200</name>
    <name type="ordered locus">LOC_Os09g38960</name>
    <name type="ORF">OsJ_30348</name>
    <name type="ORF">P0635G10.34</name>
</gene>
<sequence>METRTNEYSRKGAMWELERNLDQPMDAEAGRLRNMYREKTYPTILLLRLAFQSLGVVFGDLGTSPLYVFYNIFPHGIEDTEQVIGALSLIIYSLTLIPLVKYVFIVLRANDNGQGGTFALYSLLCRHAKINIIPNQHRTDQDLTTYSRRTYEEKSLAAKIQRWLEGHQFRKNLILILVLFGTCMAVGDGILTPAISVLSATGGIQVEEGRMRNDVVVIISVLILIGLFSMQHYGTDKVSWLFAPIVFVWFILIGILGAVNICKYDHSVLKAFNPVYVYRYFKRGKTSWTSLGGIMLSITGTEALFADLSYFPVQAIQIAFTVVVFPCLLLQYTGQAAFIAANTNQVSHAFYISLPAPILWPAFAVATAAAIVASQATISATYSIIKQALALGCFPRVKIIHTSKKYLGQIYSPDINWILMVFCIAVTAGFKNQSQIANAYGTAVIMVMLVTTFLMIPIMLLVWRSHWTLVVAFTVLSLLVEIPYFSAVVRKIDQGGWVPLVFAAGFMIIMYVWHYGTLKRYEFEMHSKVSMAWILGLGPSLGLVRVPGIGLVYTELASGVPHIFSHFITNLPAIHSTLVFVCVKYLPVYTVPPDERFLVKRIGPKNFHMFRCVARYGYKDIHKKDDDFEKMLFDSLILFVRLESMMEEYSDSDEYSTLMMSLPNNPGISNGGVTTTGTNNVMEVMSCTSTHDSIVPVNSRSDDTGSSQVMPASGQMAFQSVGDEIAFLNACRDAGVVHILGNTVIRARRDSGFVKKIVINYMYAFLRKICRENSAIFNVPHESMLNVGQVFYV</sequence>
<evidence type="ECO:0000250" key="1"/>
<evidence type="ECO:0000255" key="2"/>
<evidence type="ECO:0000305" key="3"/>
<keyword id="KW-0325">Glycoprotein</keyword>
<keyword id="KW-0406">Ion transport</keyword>
<keyword id="KW-0472">Membrane</keyword>
<keyword id="KW-0630">Potassium</keyword>
<keyword id="KW-0633">Potassium transport</keyword>
<keyword id="KW-1185">Reference proteome</keyword>
<keyword id="KW-0812">Transmembrane</keyword>
<keyword id="KW-1133">Transmembrane helix</keyword>
<keyword id="KW-0813">Transport</keyword>